<proteinExistence type="evidence at transcript level"/>
<comment type="subcellular location">
    <subcellularLocation>
        <location evidence="4">Secreted</location>
    </subcellularLocation>
</comment>
<comment type="alternative products">
    <event type="alternative splicing"/>
    <isoform>
        <id>Q52KP5-1</id>
        <name>1</name>
        <sequence type="displayed"/>
    </isoform>
    <isoform>
        <id>Q52KP5-2</id>
        <name>2</name>
        <sequence type="described" ref="VSP_014702"/>
    </isoform>
</comment>
<comment type="similarity">
    <text evidence="4">Belongs to the NXPE family.</text>
</comment>
<dbReference type="EMBL" id="AK048132">
    <property type="protein sequence ID" value="BAC33253.1"/>
    <property type="molecule type" value="mRNA"/>
</dbReference>
<dbReference type="EMBL" id="BC085195">
    <property type="protein sequence ID" value="AAH85195.1"/>
    <property type="molecule type" value="mRNA"/>
</dbReference>
<dbReference type="EMBL" id="BC094249">
    <property type="protein sequence ID" value="AAH94249.1"/>
    <property type="molecule type" value="mRNA"/>
</dbReference>
<dbReference type="CCDS" id="CCDS23152.1">
    <molecule id="Q52KP5-1"/>
</dbReference>
<dbReference type="RefSeq" id="NP_766509.2">
    <molecule id="Q52KP5-1"/>
    <property type="nucleotide sequence ID" value="NM_172921.3"/>
</dbReference>
<dbReference type="RefSeq" id="XP_006510388.1">
    <molecule id="Q52KP5-1"/>
    <property type="nucleotide sequence ID" value="XM_006510325.2"/>
</dbReference>
<dbReference type="RefSeq" id="XP_017168864.1">
    <molecule id="Q52KP5-1"/>
    <property type="nucleotide sequence ID" value="XM_017313375.3"/>
</dbReference>
<dbReference type="RefSeq" id="XP_017168865.1">
    <property type="nucleotide sequence ID" value="XM_017313376.1"/>
</dbReference>
<dbReference type="RefSeq" id="XP_017168866.1">
    <molecule id="Q52KP5-1"/>
    <property type="nucleotide sequence ID" value="XM_017313377.2"/>
</dbReference>
<dbReference type="RefSeq" id="XP_017168867.1">
    <molecule id="Q52KP5-1"/>
    <property type="nucleotide sequence ID" value="XM_017313378.1"/>
</dbReference>
<dbReference type="RefSeq" id="XP_017168868.1">
    <molecule id="Q52KP5-1"/>
    <property type="nucleotide sequence ID" value="XM_017313379.2"/>
</dbReference>
<dbReference type="RefSeq" id="XP_017168869.1">
    <property type="nucleotide sequence ID" value="XM_017313380.1"/>
</dbReference>
<dbReference type="RefSeq" id="XP_017168870.1">
    <property type="nucleotide sequence ID" value="XM_017313381.1"/>
</dbReference>
<dbReference type="RefSeq" id="XP_017168871.1">
    <property type="nucleotide sequence ID" value="XM_017313382.1"/>
</dbReference>
<dbReference type="RefSeq" id="XP_017168872.1">
    <property type="nucleotide sequence ID" value="XM_017313383.1"/>
</dbReference>
<dbReference type="RefSeq" id="XP_017168873.1">
    <molecule id="Q52KP5-1"/>
    <property type="nucleotide sequence ID" value="XM_017313384.1"/>
</dbReference>
<dbReference type="RefSeq" id="XP_017168874.1">
    <property type="nucleotide sequence ID" value="XM_017313385.1"/>
</dbReference>
<dbReference type="RefSeq" id="XP_030100226.1">
    <molecule id="Q52KP5-1"/>
    <property type="nucleotide sequence ID" value="XM_030244366.1"/>
</dbReference>
<dbReference type="RefSeq" id="XP_030100227.1">
    <molecule id="Q52KP5-1"/>
    <property type="nucleotide sequence ID" value="XM_030244367.1"/>
</dbReference>
<dbReference type="RefSeq" id="XP_030100228.1">
    <molecule id="Q52KP5-1"/>
    <property type="nucleotide sequence ID" value="XM_030244368.1"/>
</dbReference>
<dbReference type="RefSeq" id="XP_030100229.1">
    <molecule id="Q52KP5-1"/>
    <property type="nucleotide sequence ID" value="XM_030244369.1"/>
</dbReference>
<dbReference type="RefSeq" id="XP_030100230.1">
    <molecule id="Q52KP5-1"/>
    <property type="nucleotide sequence ID" value="XM_030244370.2"/>
</dbReference>
<dbReference type="RefSeq" id="XP_030100231.1">
    <molecule id="Q52KP5-1"/>
    <property type="nucleotide sequence ID" value="XM_030244371.1"/>
</dbReference>
<dbReference type="RefSeq" id="XP_030100233.1">
    <molecule id="Q52KP5-1"/>
    <property type="nucleotide sequence ID" value="XM_030244373.1"/>
</dbReference>
<dbReference type="RefSeq" id="XP_030100234.1">
    <molecule id="Q52KP5-1"/>
    <property type="nucleotide sequence ID" value="XM_030244374.1"/>
</dbReference>
<dbReference type="RefSeq" id="XP_030100235.1">
    <molecule id="Q52KP5-1"/>
    <property type="nucleotide sequence ID" value="XM_030244375.1"/>
</dbReference>
<dbReference type="BioGRID" id="232692">
    <property type="interactions" value="4"/>
</dbReference>
<dbReference type="FunCoup" id="Q52KP5">
    <property type="interactions" value="8"/>
</dbReference>
<dbReference type="GlyCosmos" id="Q52KP5">
    <property type="glycosylation" value="3 sites, No reported glycans"/>
</dbReference>
<dbReference type="GlyGen" id="Q52KP5">
    <property type="glycosylation" value="3 sites"/>
</dbReference>
<dbReference type="iPTMnet" id="Q52KP5"/>
<dbReference type="PhosphoSitePlus" id="Q52KP5"/>
<dbReference type="PaxDb" id="10090-ENSMUSP00000091375"/>
<dbReference type="ProteomicsDB" id="293910">
    <molecule id="Q52KP5-1"/>
</dbReference>
<dbReference type="ProteomicsDB" id="293911">
    <molecule id="Q52KP5-2"/>
</dbReference>
<dbReference type="Antibodypedia" id="9003">
    <property type="antibodies" value="77 antibodies from 18 providers"/>
</dbReference>
<dbReference type="DNASU" id="244853"/>
<dbReference type="Ensembl" id="ENSMUST00000093853.5">
    <molecule id="Q52KP5-1"/>
    <property type="protein sequence ID" value="ENSMUSP00000091375.5"/>
    <property type="gene ID" value="ENSMUSG00000044229.10"/>
</dbReference>
<dbReference type="Ensembl" id="ENSMUST00000215780.2">
    <molecule id="Q52KP5-1"/>
    <property type="protein sequence ID" value="ENSMUSP00000149741.2"/>
    <property type="gene ID" value="ENSMUSG00000044229.10"/>
</dbReference>
<dbReference type="Ensembl" id="ENSMUST00000216998.2">
    <molecule id="Q52KP5-2"/>
    <property type="protein sequence ID" value="ENSMUSP00000149644.2"/>
    <property type="gene ID" value="ENSMUSG00000044229.10"/>
</dbReference>
<dbReference type="GeneID" id="244853"/>
<dbReference type="KEGG" id="mmu:244853"/>
<dbReference type="UCSC" id="uc009phu.2">
    <molecule id="Q52KP5-1"/>
    <property type="organism name" value="mouse"/>
</dbReference>
<dbReference type="UCSC" id="uc009phv.2">
    <molecule id="Q52KP5-2"/>
    <property type="organism name" value="mouse"/>
</dbReference>
<dbReference type="AGR" id="MGI:1924792"/>
<dbReference type="CTD" id="54827"/>
<dbReference type="MGI" id="MGI:1924792">
    <property type="gene designation" value="Nxpe4"/>
</dbReference>
<dbReference type="VEuPathDB" id="HostDB:ENSMUSG00000044229"/>
<dbReference type="eggNOG" id="ENOG502QW5F">
    <property type="taxonomic scope" value="Eukaryota"/>
</dbReference>
<dbReference type="GeneTree" id="ENSGT00950000182866"/>
<dbReference type="HOGENOM" id="CLU_031119_0_0_1"/>
<dbReference type="InParanoid" id="Q52KP5"/>
<dbReference type="OMA" id="IYIQWQR"/>
<dbReference type="OrthoDB" id="2112051at2759"/>
<dbReference type="PhylomeDB" id="Q52KP5"/>
<dbReference type="TreeFam" id="TF329555"/>
<dbReference type="BioGRID-ORCS" id="244853">
    <property type="hits" value="0 hits in 75 CRISPR screens"/>
</dbReference>
<dbReference type="ChiTaRS" id="Nxpe4">
    <property type="organism name" value="mouse"/>
</dbReference>
<dbReference type="PRO" id="PR:Q52KP5"/>
<dbReference type="Proteomes" id="UP000000589">
    <property type="component" value="Chromosome 9"/>
</dbReference>
<dbReference type="RNAct" id="Q52KP5">
    <property type="molecule type" value="protein"/>
</dbReference>
<dbReference type="Bgee" id="ENSMUSG00000044229">
    <property type="expression patterns" value="Expressed in prostate gland and 175 other cell types or tissues"/>
</dbReference>
<dbReference type="GO" id="GO:0005576">
    <property type="term" value="C:extracellular region"/>
    <property type="evidence" value="ECO:0007669"/>
    <property type="project" value="UniProtKB-SubCell"/>
</dbReference>
<dbReference type="Gene3D" id="2.60.40.10">
    <property type="entry name" value="Immunoglobulins"/>
    <property type="match status" value="1"/>
</dbReference>
<dbReference type="InterPro" id="IPR013783">
    <property type="entry name" value="Ig-like_fold"/>
</dbReference>
<dbReference type="InterPro" id="IPR014756">
    <property type="entry name" value="Ig_E-set"/>
</dbReference>
<dbReference type="InterPro" id="IPR057106">
    <property type="entry name" value="NXPE4_C"/>
</dbReference>
<dbReference type="InterPro" id="IPR026845">
    <property type="entry name" value="NXPH/NXPE"/>
</dbReference>
<dbReference type="PANTHER" id="PTHR16165">
    <property type="entry name" value="NXPE FAMILY MEMBER"/>
    <property type="match status" value="1"/>
</dbReference>
<dbReference type="PANTHER" id="PTHR16165:SF27">
    <property type="entry name" value="NXPE FAMILY MEMBER 4"/>
    <property type="match status" value="1"/>
</dbReference>
<dbReference type="Pfam" id="PF06312">
    <property type="entry name" value="Neurexophilin"/>
    <property type="match status" value="1"/>
</dbReference>
<dbReference type="Pfam" id="PF24536">
    <property type="entry name" value="NXPE4_C"/>
    <property type="match status" value="1"/>
</dbReference>
<dbReference type="SUPFAM" id="SSF81296">
    <property type="entry name" value="E set domains"/>
    <property type="match status" value="1"/>
</dbReference>
<gene>
    <name type="primary">Nxpe4</name>
    <name type="synonym">Fam55d</name>
</gene>
<evidence type="ECO:0000255" key="1"/>
<evidence type="ECO:0000303" key="2">
    <source>
    </source>
</evidence>
<evidence type="ECO:0000303" key="3">
    <source>
    </source>
</evidence>
<evidence type="ECO:0000305" key="4"/>
<keyword id="KW-0025">Alternative splicing</keyword>
<keyword id="KW-0325">Glycoprotein</keyword>
<keyword id="KW-1185">Reference proteome</keyword>
<keyword id="KW-0964">Secreted</keyword>
<keyword id="KW-0732">Signal</keyword>
<accession>Q52KP5</accession>
<accession>Q0VGS9</accession>
<accession>Q8BKY4</accession>
<feature type="signal peptide" evidence="1">
    <location>
        <begin position="1"/>
        <end position="26"/>
    </location>
</feature>
<feature type="chain" id="PRO_0000019554" description="NXPE family member 4">
    <location>
        <begin position="27"/>
        <end position="543"/>
    </location>
</feature>
<feature type="glycosylation site" description="N-linked (GlcNAc...) asparagine" evidence="1">
    <location>
        <position position="91"/>
    </location>
</feature>
<feature type="glycosylation site" description="N-linked (GlcNAc...) asparagine" evidence="1">
    <location>
        <position position="159"/>
    </location>
</feature>
<feature type="glycosylation site" description="N-linked (GlcNAc...) asparagine" evidence="1">
    <location>
        <position position="223"/>
    </location>
</feature>
<feature type="splice variant" id="VSP_014702" description="In isoform 2." evidence="2 3">
    <original>TLRSVDLHESGKLQHQLAVDLDEKISIQWQKHGYPLIGSLVYSVKEIENIARIIDRTGGEKNTVIVISLGQHFRPFPIDLFIRRALNVHKALQRLLLRSPDTVVVLKTENTRELNSDVERFSDFHGYTQYLALKDIFQDLNVGVIDAWDMTVAYGINNVHPPEDVVRSQINIFLNYIC</original>
    <variation>SMSQYKLFKALSETMFLFQGRKKKYRRCLFFTIVFKHKPRALFTKCYYHSLEQCSLPLVLV</variation>
    <location>
        <begin position="366"/>
        <end position="543"/>
    </location>
</feature>
<reference key="1">
    <citation type="journal article" date="2005" name="Science">
        <title>The transcriptional landscape of the mammalian genome.</title>
        <authorList>
            <person name="Carninci P."/>
            <person name="Kasukawa T."/>
            <person name="Katayama S."/>
            <person name="Gough J."/>
            <person name="Frith M.C."/>
            <person name="Maeda N."/>
            <person name="Oyama R."/>
            <person name="Ravasi T."/>
            <person name="Lenhard B."/>
            <person name="Wells C."/>
            <person name="Kodzius R."/>
            <person name="Shimokawa K."/>
            <person name="Bajic V.B."/>
            <person name="Brenner S.E."/>
            <person name="Batalov S."/>
            <person name="Forrest A.R."/>
            <person name="Zavolan M."/>
            <person name="Davis M.J."/>
            <person name="Wilming L.G."/>
            <person name="Aidinis V."/>
            <person name="Allen J.E."/>
            <person name="Ambesi-Impiombato A."/>
            <person name="Apweiler R."/>
            <person name="Aturaliya R.N."/>
            <person name="Bailey T.L."/>
            <person name="Bansal M."/>
            <person name="Baxter L."/>
            <person name="Beisel K.W."/>
            <person name="Bersano T."/>
            <person name="Bono H."/>
            <person name="Chalk A.M."/>
            <person name="Chiu K.P."/>
            <person name="Choudhary V."/>
            <person name="Christoffels A."/>
            <person name="Clutterbuck D.R."/>
            <person name="Crowe M.L."/>
            <person name="Dalla E."/>
            <person name="Dalrymple B.P."/>
            <person name="de Bono B."/>
            <person name="Della Gatta G."/>
            <person name="di Bernardo D."/>
            <person name="Down T."/>
            <person name="Engstrom P."/>
            <person name="Fagiolini M."/>
            <person name="Faulkner G."/>
            <person name="Fletcher C.F."/>
            <person name="Fukushima T."/>
            <person name="Furuno M."/>
            <person name="Futaki S."/>
            <person name="Gariboldi M."/>
            <person name="Georgii-Hemming P."/>
            <person name="Gingeras T.R."/>
            <person name="Gojobori T."/>
            <person name="Green R.E."/>
            <person name="Gustincich S."/>
            <person name="Harbers M."/>
            <person name="Hayashi Y."/>
            <person name="Hensch T.K."/>
            <person name="Hirokawa N."/>
            <person name="Hill D."/>
            <person name="Huminiecki L."/>
            <person name="Iacono M."/>
            <person name="Ikeo K."/>
            <person name="Iwama A."/>
            <person name="Ishikawa T."/>
            <person name="Jakt M."/>
            <person name="Kanapin A."/>
            <person name="Katoh M."/>
            <person name="Kawasawa Y."/>
            <person name="Kelso J."/>
            <person name="Kitamura H."/>
            <person name="Kitano H."/>
            <person name="Kollias G."/>
            <person name="Krishnan S.P."/>
            <person name="Kruger A."/>
            <person name="Kummerfeld S.K."/>
            <person name="Kurochkin I.V."/>
            <person name="Lareau L.F."/>
            <person name="Lazarevic D."/>
            <person name="Lipovich L."/>
            <person name="Liu J."/>
            <person name="Liuni S."/>
            <person name="McWilliam S."/>
            <person name="Madan Babu M."/>
            <person name="Madera M."/>
            <person name="Marchionni L."/>
            <person name="Matsuda H."/>
            <person name="Matsuzawa S."/>
            <person name="Miki H."/>
            <person name="Mignone F."/>
            <person name="Miyake S."/>
            <person name="Morris K."/>
            <person name="Mottagui-Tabar S."/>
            <person name="Mulder N."/>
            <person name="Nakano N."/>
            <person name="Nakauchi H."/>
            <person name="Ng P."/>
            <person name="Nilsson R."/>
            <person name="Nishiguchi S."/>
            <person name="Nishikawa S."/>
            <person name="Nori F."/>
            <person name="Ohara O."/>
            <person name="Okazaki Y."/>
            <person name="Orlando V."/>
            <person name="Pang K.C."/>
            <person name="Pavan W.J."/>
            <person name="Pavesi G."/>
            <person name="Pesole G."/>
            <person name="Petrovsky N."/>
            <person name="Piazza S."/>
            <person name="Reed J."/>
            <person name="Reid J.F."/>
            <person name="Ring B.Z."/>
            <person name="Ringwald M."/>
            <person name="Rost B."/>
            <person name="Ruan Y."/>
            <person name="Salzberg S.L."/>
            <person name="Sandelin A."/>
            <person name="Schneider C."/>
            <person name="Schoenbach C."/>
            <person name="Sekiguchi K."/>
            <person name="Semple C.A."/>
            <person name="Seno S."/>
            <person name="Sessa L."/>
            <person name="Sheng Y."/>
            <person name="Shibata Y."/>
            <person name="Shimada H."/>
            <person name="Shimada K."/>
            <person name="Silva D."/>
            <person name="Sinclair B."/>
            <person name="Sperling S."/>
            <person name="Stupka E."/>
            <person name="Sugiura K."/>
            <person name="Sultana R."/>
            <person name="Takenaka Y."/>
            <person name="Taki K."/>
            <person name="Tammoja K."/>
            <person name="Tan S.L."/>
            <person name="Tang S."/>
            <person name="Taylor M.S."/>
            <person name="Tegner J."/>
            <person name="Teichmann S.A."/>
            <person name="Ueda H.R."/>
            <person name="van Nimwegen E."/>
            <person name="Verardo R."/>
            <person name="Wei C.L."/>
            <person name="Yagi K."/>
            <person name="Yamanishi H."/>
            <person name="Zabarovsky E."/>
            <person name="Zhu S."/>
            <person name="Zimmer A."/>
            <person name="Hide W."/>
            <person name="Bult C."/>
            <person name="Grimmond S.M."/>
            <person name="Teasdale R.D."/>
            <person name="Liu E.T."/>
            <person name="Brusic V."/>
            <person name="Quackenbush J."/>
            <person name="Wahlestedt C."/>
            <person name="Mattick J.S."/>
            <person name="Hume D.A."/>
            <person name="Kai C."/>
            <person name="Sasaki D."/>
            <person name="Tomaru Y."/>
            <person name="Fukuda S."/>
            <person name="Kanamori-Katayama M."/>
            <person name="Suzuki M."/>
            <person name="Aoki J."/>
            <person name="Arakawa T."/>
            <person name="Iida J."/>
            <person name="Imamura K."/>
            <person name="Itoh M."/>
            <person name="Kato T."/>
            <person name="Kawaji H."/>
            <person name="Kawagashira N."/>
            <person name="Kawashima T."/>
            <person name="Kojima M."/>
            <person name="Kondo S."/>
            <person name="Konno H."/>
            <person name="Nakano K."/>
            <person name="Ninomiya N."/>
            <person name="Nishio T."/>
            <person name="Okada M."/>
            <person name="Plessy C."/>
            <person name="Shibata K."/>
            <person name="Shiraki T."/>
            <person name="Suzuki S."/>
            <person name="Tagami M."/>
            <person name="Waki K."/>
            <person name="Watahiki A."/>
            <person name="Okamura-Oho Y."/>
            <person name="Suzuki H."/>
            <person name="Kawai J."/>
            <person name="Hayashizaki Y."/>
        </authorList>
    </citation>
    <scope>NUCLEOTIDE SEQUENCE [LARGE SCALE MRNA] (ISOFORM 2)</scope>
    <source>
        <strain>C57BL/6J</strain>
        <tissue>Embryonic head</tissue>
    </source>
</reference>
<reference key="2">
    <citation type="journal article" date="2004" name="Genome Res.">
        <title>The status, quality, and expansion of the NIH full-length cDNA project: the Mammalian Gene Collection (MGC).</title>
        <authorList>
            <consortium name="The MGC Project Team"/>
        </authorList>
    </citation>
    <scope>NUCLEOTIDE SEQUENCE [LARGE SCALE MRNA] (ISOFORMS 1 AND 2)</scope>
    <source>
        <strain>C57BL/6J</strain>
        <tissue>Embryonic brain</tissue>
        <tissue>Eye</tissue>
    </source>
</reference>
<sequence length="543" mass="61551">MKTLASRKSLWMLLFIVIFWVSFTVFRNPVKLRTMFKLPVSFNRWNLVMGPSCPAVPLNLPVSPKETELRIREVLEKLDKQIPPRPFTHLNYTTSATHSTATILNPRDTHCVGDQLDILVEARDHLGNRKGYGGDFMRARMFSPALKAGASGKVTDFNNGTYLVSFTLFWEGTVSLSILLMHPSEGVSALWRSRKQGYDRIIFSGQFVSGASQVHTECALVLNSSVELCQYLDAQDQEAFYCVKPPNVPCAALTYMQSKNKDVSYLSQQERSLFERSNIAVEIMEKSNAISVSKCNTDTAPVKEKCKLGMVSAIPSGHVWKNAWTPASCSLAPIKMKDCLRGKFIYLMGDSTIRQWMEYFKSKVNTLRSVDLHESGKLQHQLAVDLDEKISIQWQKHGYPLIGSLVYSVKEIENIARIIDRTGGEKNTVIVISLGQHFRPFPIDLFIRRALNVHKALQRLLLRSPDTVVVLKTENTRELNSDVERFSDFHGYTQYLALKDIFQDLNVGVIDAWDMTVAYGINNVHPPEDVVRSQINIFLNYIC</sequence>
<name>NXPE4_MOUSE</name>
<protein>
    <recommendedName>
        <fullName>NXPE family member 4</fullName>
    </recommendedName>
    <alternativeName>
        <fullName>Protein FAM55D</fullName>
    </alternativeName>
</protein>
<organism>
    <name type="scientific">Mus musculus</name>
    <name type="common">Mouse</name>
    <dbReference type="NCBI Taxonomy" id="10090"/>
    <lineage>
        <taxon>Eukaryota</taxon>
        <taxon>Metazoa</taxon>
        <taxon>Chordata</taxon>
        <taxon>Craniata</taxon>
        <taxon>Vertebrata</taxon>
        <taxon>Euteleostomi</taxon>
        <taxon>Mammalia</taxon>
        <taxon>Eutheria</taxon>
        <taxon>Euarchontoglires</taxon>
        <taxon>Glires</taxon>
        <taxon>Rodentia</taxon>
        <taxon>Myomorpha</taxon>
        <taxon>Muroidea</taxon>
        <taxon>Muridae</taxon>
        <taxon>Murinae</taxon>
        <taxon>Mus</taxon>
        <taxon>Mus</taxon>
    </lineage>
</organism>